<feature type="chain" id="PRO_1000084030" description="Thiosulfate sulfurtransferase GlpE">
    <location>
        <begin position="1"/>
        <end position="110"/>
    </location>
</feature>
<feature type="domain" description="Rhodanese" evidence="1">
    <location>
        <begin position="17"/>
        <end position="105"/>
    </location>
</feature>
<feature type="active site" description="Cysteine persulfide intermediate" evidence="1">
    <location>
        <position position="65"/>
    </location>
</feature>
<dbReference type="EC" id="2.8.1.1" evidence="1"/>
<dbReference type="EMBL" id="CP000926">
    <property type="protein sequence ID" value="ABY96340.1"/>
    <property type="molecule type" value="Genomic_DNA"/>
</dbReference>
<dbReference type="RefSeq" id="WP_012270196.1">
    <property type="nucleotide sequence ID" value="NC_010322.1"/>
</dbReference>
<dbReference type="SMR" id="B0KJ90"/>
<dbReference type="KEGG" id="ppg:PputGB1_0429"/>
<dbReference type="eggNOG" id="COG0607">
    <property type="taxonomic scope" value="Bacteria"/>
</dbReference>
<dbReference type="HOGENOM" id="CLU_089574_14_0_6"/>
<dbReference type="Proteomes" id="UP000002157">
    <property type="component" value="Chromosome"/>
</dbReference>
<dbReference type="GO" id="GO:0005737">
    <property type="term" value="C:cytoplasm"/>
    <property type="evidence" value="ECO:0007669"/>
    <property type="project" value="UniProtKB-SubCell"/>
</dbReference>
<dbReference type="GO" id="GO:0004792">
    <property type="term" value="F:thiosulfate-cyanide sulfurtransferase activity"/>
    <property type="evidence" value="ECO:0007669"/>
    <property type="project" value="UniProtKB-UniRule"/>
</dbReference>
<dbReference type="GO" id="GO:0006071">
    <property type="term" value="P:glycerol metabolic process"/>
    <property type="evidence" value="ECO:0007669"/>
    <property type="project" value="UniProtKB-UniRule"/>
</dbReference>
<dbReference type="CDD" id="cd01444">
    <property type="entry name" value="GlpE_ST"/>
    <property type="match status" value="1"/>
</dbReference>
<dbReference type="Gene3D" id="3.40.250.10">
    <property type="entry name" value="Rhodanese-like domain"/>
    <property type="match status" value="1"/>
</dbReference>
<dbReference type="HAMAP" id="MF_01009">
    <property type="entry name" value="Thiosulf_sulfurtr"/>
    <property type="match status" value="1"/>
</dbReference>
<dbReference type="InterPro" id="IPR050229">
    <property type="entry name" value="GlpE_sulfurtransferase"/>
</dbReference>
<dbReference type="InterPro" id="IPR001763">
    <property type="entry name" value="Rhodanese-like_dom"/>
</dbReference>
<dbReference type="InterPro" id="IPR036873">
    <property type="entry name" value="Rhodanese-like_dom_sf"/>
</dbReference>
<dbReference type="InterPro" id="IPR023695">
    <property type="entry name" value="Thiosulf_sulfurTrfase"/>
</dbReference>
<dbReference type="NCBIfam" id="NF001195">
    <property type="entry name" value="PRK00162.1"/>
    <property type="match status" value="1"/>
</dbReference>
<dbReference type="PANTHER" id="PTHR43031">
    <property type="entry name" value="FAD-DEPENDENT OXIDOREDUCTASE"/>
    <property type="match status" value="1"/>
</dbReference>
<dbReference type="PANTHER" id="PTHR43031:SF6">
    <property type="entry name" value="THIOSULFATE SULFURTRANSFERASE GLPE"/>
    <property type="match status" value="1"/>
</dbReference>
<dbReference type="Pfam" id="PF00581">
    <property type="entry name" value="Rhodanese"/>
    <property type="match status" value="1"/>
</dbReference>
<dbReference type="SMART" id="SM00450">
    <property type="entry name" value="RHOD"/>
    <property type="match status" value="1"/>
</dbReference>
<dbReference type="SUPFAM" id="SSF52821">
    <property type="entry name" value="Rhodanese/Cell cycle control phosphatase"/>
    <property type="match status" value="1"/>
</dbReference>
<dbReference type="PROSITE" id="PS50206">
    <property type="entry name" value="RHODANESE_3"/>
    <property type="match status" value="1"/>
</dbReference>
<reference key="1">
    <citation type="submission" date="2008-01" db="EMBL/GenBank/DDBJ databases">
        <title>Complete sequence of Pseudomonas putida GB-1.</title>
        <authorList>
            <consortium name="US DOE Joint Genome Institute"/>
            <person name="Copeland A."/>
            <person name="Lucas S."/>
            <person name="Lapidus A."/>
            <person name="Barry K."/>
            <person name="Glavina del Rio T."/>
            <person name="Dalin E."/>
            <person name="Tice H."/>
            <person name="Pitluck S."/>
            <person name="Bruce D."/>
            <person name="Goodwin L."/>
            <person name="Chertkov O."/>
            <person name="Brettin T."/>
            <person name="Detter J.C."/>
            <person name="Han C."/>
            <person name="Kuske C.R."/>
            <person name="Schmutz J."/>
            <person name="Larimer F."/>
            <person name="Land M."/>
            <person name="Hauser L."/>
            <person name="Kyrpides N."/>
            <person name="Kim E."/>
            <person name="McCarthy J.K."/>
            <person name="Richardson P."/>
        </authorList>
    </citation>
    <scope>NUCLEOTIDE SEQUENCE [LARGE SCALE GENOMIC DNA]</scope>
    <source>
        <strain>GB-1</strain>
    </source>
</reference>
<evidence type="ECO:0000255" key="1">
    <source>
        <dbReference type="HAMAP-Rule" id="MF_01009"/>
    </source>
</evidence>
<comment type="function">
    <text evidence="1">Transferase that catalyzes the transfer of sulfur from thiosulfate to thiophilic acceptors such as cyanide or dithiols. May function in a CysM-independent thiosulfate assimilation pathway by catalyzing the conversion of thiosulfate to sulfite, which can then be used for L-cysteine biosynthesis.</text>
</comment>
<comment type="catalytic activity">
    <reaction evidence="1">
        <text>thiosulfate + hydrogen cyanide = thiocyanate + sulfite + 2 H(+)</text>
        <dbReference type="Rhea" id="RHEA:16881"/>
        <dbReference type="ChEBI" id="CHEBI:15378"/>
        <dbReference type="ChEBI" id="CHEBI:17359"/>
        <dbReference type="ChEBI" id="CHEBI:18022"/>
        <dbReference type="ChEBI" id="CHEBI:18407"/>
        <dbReference type="ChEBI" id="CHEBI:33542"/>
        <dbReference type="EC" id="2.8.1.1"/>
    </reaction>
</comment>
<comment type="catalytic activity">
    <reaction evidence="1">
        <text>thiosulfate + [thioredoxin]-dithiol = [thioredoxin]-disulfide + hydrogen sulfide + sulfite + 2 H(+)</text>
        <dbReference type="Rhea" id="RHEA:83859"/>
        <dbReference type="Rhea" id="RHEA-COMP:10698"/>
        <dbReference type="Rhea" id="RHEA-COMP:10700"/>
        <dbReference type="ChEBI" id="CHEBI:15378"/>
        <dbReference type="ChEBI" id="CHEBI:17359"/>
        <dbReference type="ChEBI" id="CHEBI:29919"/>
        <dbReference type="ChEBI" id="CHEBI:29950"/>
        <dbReference type="ChEBI" id="CHEBI:33542"/>
        <dbReference type="ChEBI" id="CHEBI:50058"/>
    </reaction>
</comment>
<comment type="subcellular location">
    <subcellularLocation>
        <location evidence="1">Cytoplasm</location>
    </subcellularLocation>
</comment>
<comment type="similarity">
    <text evidence="1">Belongs to the GlpE family.</text>
</comment>
<organism>
    <name type="scientific">Pseudomonas putida (strain GB-1)</name>
    <dbReference type="NCBI Taxonomy" id="76869"/>
    <lineage>
        <taxon>Bacteria</taxon>
        <taxon>Pseudomonadati</taxon>
        <taxon>Pseudomonadota</taxon>
        <taxon>Gammaproteobacteria</taxon>
        <taxon>Pseudomonadales</taxon>
        <taxon>Pseudomonadaceae</taxon>
        <taxon>Pseudomonas</taxon>
    </lineage>
</organism>
<name>GLPE_PSEPG</name>
<proteinExistence type="inferred from homology"/>
<gene>
    <name evidence="1" type="primary">glpE</name>
    <name type="ordered locus">PputGB1_0429</name>
</gene>
<protein>
    <recommendedName>
        <fullName evidence="1">Thiosulfate sulfurtransferase GlpE</fullName>
        <ecNumber evidence="1">2.8.1.1</ecNumber>
    </recommendedName>
</protein>
<accession>B0KJ90</accession>
<keyword id="KW-0963">Cytoplasm</keyword>
<keyword id="KW-0808">Transferase</keyword>
<sequence length="110" mass="11779">MSEFKRIPPEQALELRKQEGAVVVDIRDAQAFAAGHITGARHLDNHSVADFIRGANLDAPTLVVCYHGNSSQSAAAYLVGQGFSDVYSVDGGFELWRATYPAETAQGAAE</sequence>